<dbReference type="EC" id="2.7.7.89" evidence="1"/>
<dbReference type="EC" id="2.7.7.42" evidence="1"/>
<dbReference type="EMBL" id="CP000450">
    <property type="protein sequence ID" value="ABI59518.1"/>
    <property type="molecule type" value="Genomic_DNA"/>
</dbReference>
<dbReference type="RefSeq" id="WP_011634337.1">
    <property type="nucleotide sequence ID" value="NC_008344.1"/>
</dbReference>
<dbReference type="SMR" id="Q0AGL4"/>
<dbReference type="STRING" id="335283.Neut_1266"/>
<dbReference type="KEGG" id="net:Neut_1266"/>
<dbReference type="eggNOG" id="COG1391">
    <property type="taxonomic scope" value="Bacteria"/>
</dbReference>
<dbReference type="HOGENOM" id="CLU_006233_0_1_4"/>
<dbReference type="OrthoDB" id="9759366at2"/>
<dbReference type="Proteomes" id="UP000001966">
    <property type="component" value="Chromosome"/>
</dbReference>
<dbReference type="GO" id="GO:0005829">
    <property type="term" value="C:cytosol"/>
    <property type="evidence" value="ECO:0007669"/>
    <property type="project" value="TreeGrafter"/>
</dbReference>
<dbReference type="GO" id="GO:0008882">
    <property type="term" value="F:[glutamate-ammonia-ligase] adenylyltransferase activity"/>
    <property type="evidence" value="ECO:0007669"/>
    <property type="project" value="UniProtKB-UniRule"/>
</dbReference>
<dbReference type="GO" id="GO:0047388">
    <property type="term" value="F:[glutamine synthetase]-adenylyl-L-tyrosine phosphorylase activity"/>
    <property type="evidence" value="ECO:0007669"/>
    <property type="project" value="UniProtKB-EC"/>
</dbReference>
<dbReference type="GO" id="GO:0005524">
    <property type="term" value="F:ATP binding"/>
    <property type="evidence" value="ECO:0007669"/>
    <property type="project" value="UniProtKB-UniRule"/>
</dbReference>
<dbReference type="GO" id="GO:0000287">
    <property type="term" value="F:magnesium ion binding"/>
    <property type="evidence" value="ECO:0007669"/>
    <property type="project" value="UniProtKB-UniRule"/>
</dbReference>
<dbReference type="GO" id="GO:0000820">
    <property type="term" value="P:regulation of glutamine family amino acid metabolic process"/>
    <property type="evidence" value="ECO:0007669"/>
    <property type="project" value="UniProtKB-UniRule"/>
</dbReference>
<dbReference type="CDD" id="cd05401">
    <property type="entry name" value="NT_GlnE_GlnD_like"/>
    <property type="match status" value="2"/>
</dbReference>
<dbReference type="FunFam" id="1.20.120.330:FF:000005">
    <property type="entry name" value="Bifunctional glutamine synthetase adenylyltransferase/adenylyl-removing enzyme"/>
    <property type="match status" value="1"/>
</dbReference>
<dbReference type="Gene3D" id="1.20.120.1510">
    <property type="match status" value="1"/>
</dbReference>
<dbReference type="Gene3D" id="3.30.460.10">
    <property type="entry name" value="Beta Polymerase, domain 2"/>
    <property type="match status" value="2"/>
</dbReference>
<dbReference type="Gene3D" id="1.20.120.330">
    <property type="entry name" value="Nucleotidyltransferases domain 2"/>
    <property type="match status" value="2"/>
</dbReference>
<dbReference type="HAMAP" id="MF_00802">
    <property type="entry name" value="GlnE"/>
    <property type="match status" value="1"/>
</dbReference>
<dbReference type="InterPro" id="IPR023057">
    <property type="entry name" value="GlnE"/>
</dbReference>
<dbReference type="InterPro" id="IPR005190">
    <property type="entry name" value="GlnE_rpt_dom"/>
</dbReference>
<dbReference type="InterPro" id="IPR043519">
    <property type="entry name" value="NT_sf"/>
</dbReference>
<dbReference type="InterPro" id="IPR013546">
    <property type="entry name" value="PII_UdlTrfase/GS_AdlTrfase"/>
</dbReference>
<dbReference type="NCBIfam" id="NF008292">
    <property type="entry name" value="PRK11072.1"/>
    <property type="match status" value="1"/>
</dbReference>
<dbReference type="PANTHER" id="PTHR30621:SF0">
    <property type="entry name" value="BIFUNCTIONAL GLUTAMINE SYNTHETASE ADENYLYLTRANSFERASE_ADENYLYL-REMOVING ENZYME"/>
    <property type="match status" value="1"/>
</dbReference>
<dbReference type="PANTHER" id="PTHR30621">
    <property type="entry name" value="GLUTAMINE SYNTHETASE ADENYLYLTRANSFERASE"/>
    <property type="match status" value="1"/>
</dbReference>
<dbReference type="Pfam" id="PF08335">
    <property type="entry name" value="GlnD_UR_UTase"/>
    <property type="match status" value="2"/>
</dbReference>
<dbReference type="Pfam" id="PF03710">
    <property type="entry name" value="GlnE"/>
    <property type="match status" value="2"/>
</dbReference>
<dbReference type="SUPFAM" id="SSF81301">
    <property type="entry name" value="Nucleotidyltransferase"/>
    <property type="match status" value="2"/>
</dbReference>
<dbReference type="SUPFAM" id="SSF81593">
    <property type="entry name" value="Nucleotidyltransferase substrate binding subunit/domain"/>
    <property type="match status" value="2"/>
</dbReference>
<gene>
    <name evidence="1" type="primary">glnE</name>
    <name type="ordered locus">Neut_1266</name>
</gene>
<reference key="1">
    <citation type="journal article" date="2007" name="Environ. Microbiol.">
        <title>Whole-genome analysis of the ammonia-oxidizing bacterium, Nitrosomonas eutropha C91: implications for niche adaptation.</title>
        <authorList>
            <person name="Stein L.Y."/>
            <person name="Arp D.J."/>
            <person name="Berube P.M."/>
            <person name="Chain P.S."/>
            <person name="Hauser L."/>
            <person name="Jetten M.S."/>
            <person name="Klotz M.G."/>
            <person name="Larimer F.W."/>
            <person name="Norton J.M."/>
            <person name="Op den Camp H.J.M."/>
            <person name="Shin M."/>
            <person name="Wei X."/>
        </authorList>
    </citation>
    <scope>NUCLEOTIDE SEQUENCE [LARGE SCALE GENOMIC DNA]</scope>
    <source>
        <strain>DSM 101675 / C91 / Nm57</strain>
    </source>
</reference>
<organism>
    <name type="scientific">Nitrosomonas eutropha (strain DSM 101675 / C91 / Nm57)</name>
    <dbReference type="NCBI Taxonomy" id="335283"/>
    <lineage>
        <taxon>Bacteria</taxon>
        <taxon>Pseudomonadati</taxon>
        <taxon>Pseudomonadota</taxon>
        <taxon>Betaproteobacteria</taxon>
        <taxon>Nitrosomonadales</taxon>
        <taxon>Nitrosomonadaceae</taxon>
        <taxon>Nitrosomonas</taxon>
    </lineage>
</organism>
<name>GLNE_NITEC</name>
<proteinExistence type="inferred from homology"/>
<feature type="chain" id="PRO_1000212986" description="Bifunctional glutamine synthetase adenylyltransferase/adenylyl-removing enzyme">
    <location>
        <begin position="1"/>
        <end position="929"/>
    </location>
</feature>
<feature type="region of interest" description="Adenylyl removase" evidence="1">
    <location>
        <begin position="1"/>
        <end position="422"/>
    </location>
</feature>
<feature type="region of interest" description="Adenylyl transferase" evidence="1">
    <location>
        <begin position="429"/>
        <end position="929"/>
    </location>
</feature>
<keyword id="KW-0067">ATP-binding</keyword>
<keyword id="KW-0460">Magnesium</keyword>
<keyword id="KW-0511">Multifunctional enzyme</keyword>
<keyword id="KW-0547">Nucleotide-binding</keyword>
<keyword id="KW-0548">Nucleotidyltransferase</keyword>
<keyword id="KW-0808">Transferase</keyword>
<protein>
    <recommendedName>
        <fullName evidence="1">Bifunctional glutamine synthetase adenylyltransferase/adenylyl-removing enzyme</fullName>
    </recommendedName>
    <alternativeName>
        <fullName evidence="1">ATP:glutamine synthetase adenylyltransferase</fullName>
    </alternativeName>
    <alternativeName>
        <fullName evidence="1">ATase</fullName>
    </alternativeName>
    <domain>
        <recommendedName>
            <fullName evidence="1">Glutamine synthetase adenylyl-L-tyrosine phosphorylase</fullName>
            <ecNumber evidence="1">2.7.7.89</ecNumber>
        </recommendedName>
        <alternativeName>
            <fullName evidence="1">Adenylyl removase</fullName>
            <shortName evidence="1">AR</shortName>
            <shortName evidence="1">AT-N</shortName>
        </alternativeName>
    </domain>
    <domain>
        <recommendedName>
            <fullName evidence="1">Glutamine synthetase adenylyl transferase</fullName>
            <ecNumber evidence="1">2.7.7.42</ecNumber>
        </recommendedName>
        <alternativeName>
            <fullName evidence="1">Adenylyl transferase</fullName>
            <shortName evidence="1">AT</shortName>
            <shortName evidence="1">AT-C</shortName>
        </alternativeName>
    </domain>
</protein>
<sequence>MTTPISTSRAASIVSSILPYSRYLKRVLENESELQQELLEQLHNPFTREEMLGFLQDSTAHLIDEADLHRLLRQLRKRVILRLAARDLAGLADLNEVMATMTALADVTIQFSLEFLHAAMVQPGHFGKPKGEKTGTEQQLLIVAMGKLGGGELNVSSDVDLVFIYPEDGETDGSKSITNHEFFLRLGRKLIASLNDYTVDGYVFRVDMRLRPYGENSPLAISLPMLEDYFVTQGREWERHAWIKSRVITGSSIAEAALMELIVRPFVFRKYLDFEAYEAMRSLHTQLRKEVDRRELHDNIKLGPGGIREIEFITQVFQLIRGGRDADLCIRPTLGVLQRLKQKQPLPEQTVEELIEAYYFLRKLEHRLQYLDDQQTQNLPQHSDDQILIAKSMGFTDYTGFLKHLDLHRQNVTRHFEQIFAVRRKAIKLGTFARIRPEQTNDNEIVKVFSNQLKTLGYIDPDKITARVQQFYDGTTFRQLSHPNQERILELMPTLMEVVTRFPPVEITLERMLRLLEKIGQYSAYLALLQEYPQTLPRVAKLVSISQWASDYLGSHPILLDELLAPSGLHTLPDWPTLKTELIHQLHHGNIPKAQIIEWQMDVLRHFQHAQVFRLLAVDLEGNLLLETLSDHLTALADLILDNVLQLAWQGLKKKHRKSPAFAIIGYGKLGGKELGYVSDLDIVYLYQDNHPDAMEIYTKLAQNINLWLTSHTSAGVLYETDLRLRPNGTSGLLVNSIEAFSLYQHEQAWVWEHQALTRARFVIGDSEVGEKFEQMRKNILCQPRDMENLKREILMMRTKMLEAHPNSTPLFDVKHDHGGIIDVEFIVQYLVLGYAHRYPQLTSNIGNIALLKLAGELGLTSAEKANAAFIAYRELRRTQHQLRLSGIPEATGTALPKDVSQKFARVTSDYLSSARRAVFQLWEDVFGT</sequence>
<comment type="function">
    <text evidence="1">Involved in the regulation of glutamine synthetase GlnA, a key enzyme in the process to assimilate ammonia. When cellular nitrogen levels are high, the C-terminal adenylyl transferase (AT) inactivates GlnA by covalent transfer of an adenylyl group from ATP to specific tyrosine residue of GlnA, thus reducing its activity. Conversely, when nitrogen levels are low, the N-terminal adenylyl removase (AR) activates GlnA by removing the adenylyl group by phosphorolysis, increasing its activity. The regulatory region of GlnE binds the signal transduction protein PII (GlnB) which indicates the nitrogen status of the cell.</text>
</comment>
<comment type="catalytic activity">
    <reaction evidence="1">
        <text>[glutamine synthetase]-O(4)-(5'-adenylyl)-L-tyrosine + phosphate = [glutamine synthetase]-L-tyrosine + ADP</text>
        <dbReference type="Rhea" id="RHEA:43716"/>
        <dbReference type="Rhea" id="RHEA-COMP:10660"/>
        <dbReference type="Rhea" id="RHEA-COMP:10661"/>
        <dbReference type="ChEBI" id="CHEBI:43474"/>
        <dbReference type="ChEBI" id="CHEBI:46858"/>
        <dbReference type="ChEBI" id="CHEBI:83624"/>
        <dbReference type="ChEBI" id="CHEBI:456216"/>
        <dbReference type="EC" id="2.7.7.89"/>
    </reaction>
</comment>
<comment type="catalytic activity">
    <reaction evidence="1">
        <text>[glutamine synthetase]-L-tyrosine + ATP = [glutamine synthetase]-O(4)-(5'-adenylyl)-L-tyrosine + diphosphate</text>
        <dbReference type="Rhea" id="RHEA:18589"/>
        <dbReference type="Rhea" id="RHEA-COMP:10660"/>
        <dbReference type="Rhea" id="RHEA-COMP:10661"/>
        <dbReference type="ChEBI" id="CHEBI:30616"/>
        <dbReference type="ChEBI" id="CHEBI:33019"/>
        <dbReference type="ChEBI" id="CHEBI:46858"/>
        <dbReference type="ChEBI" id="CHEBI:83624"/>
        <dbReference type="EC" id="2.7.7.42"/>
    </reaction>
</comment>
<comment type="cofactor">
    <cofactor evidence="1">
        <name>Mg(2+)</name>
        <dbReference type="ChEBI" id="CHEBI:18420"/>
    </cofactor>
</comment>
<comment type="similarity">
    <text evidence="1">Belongs to the GlnE family.</text>
</comment>
<accession>Q0AGL4</accession>
<evidence type="ECO:0000255" key="1">
    <source>
        <dbReference type="HAMAP-Rule" id="MF_00802"/>
    </source>
</evidence>